<comment type="function">
    <text evidence="1">This is one of the proteins that bind and probably mediate the attachment of the 5S RNA into the large ribosomal subunit, where it forms part of the central protuberance.</text>
</comment>
<comment type="subunit">
    <text evidence="1">Part of the 50S ribosomal subunit; part of the 5S rRNA/L5/L18/L25 subcomplex. Contacts the 5S and 23S rRNAs.</text>
</comment>
<comment type="similarity">
    <text evidence="1">Belongs to the universal ribosomal protein uL18 family.</text>
</comment>
<sequence length="118" mass="12779">MPNSIESRLRRARQTRAKIAELKVVRLAIHRSNSHIYAQLIDGSGSKVLASASTLEPELRKELPNGGTVTAAAVVGKRVAEKARGLGIETVAFDRSGFKYHGRVKALADAARENGLKF</sequence>
<feature type="chain" id="PRO_0000251337" description="Large ribosomal subunit protein uL18">
    <location>
        <begin position="1"/>
        <end position="118"/>
    </location>
</feature>
<dbReference type="EMBL" id="CP000103">
    <property type="protein sequence ID" value="ABB74090.1"/>
    <property type="molecule type" value="Genomic_DNA"/>
</dbReference>
<dbReference type="RefSeq" id="WP_011380139.1">
    <property type="nucleotide sequence ID" value="NC_007614.1"/>
</dbReference>
<dbReference type="SMR" id="Q2YAY1"/>
<dbReference type="STRING" id="323848.Nmul_A0783"/>
<dbReference type="KEGG" id="nmu:Nmul_A0783"/>
<dbReference type="eggNOG" id="COG0256">
    <property type="taxonomic scope" value="Bacteria"/>
</dbReference>
<dbReference type="HOGENOM" id="CLU_098841_0_1_4"/>
<dbReference type="OrthoDB" id="9810939at2"/>
<dbReference type="Proteomes" id="UP000002718">
    <property type="component" value="Chromosome"/>
</dbReference>
<dbReference type="GO" id="GO:0022625">
    <property type="term" value="C:cytosolic large ribosomal subunit"/>
    <property type="evidence" value="ECO:0007669"/>
    <property type="project" value="TreeGrafter"/>
</dbReference>
<dbReference type="GO" id="GO:0008097">
    <property type="term" value="F:5S rRNA binding"/>
    <property type="evidence" value="ECO:0007669"/>
    <property type="project" value="TreeGrafter"/>
</dbReference>
<dbReference type="GO" id="GO:0003735">
    <property type="term" value="F:structural constituent of ribosome"/>
    <property type="evidence" value="ECO:0007669"/>
    <property type="project" value="InterPro"/>
</dbReference>
<dbReference type="GO" id="GO:0006412">
    <property type="term" value="P:translation"/>
    <property type="evidence" value="ECO:0007669"/>
    <property type="project" value="UniProtKB-UniRule"/>
</dbReference>
<dbReference type="CDD" id="cd00432">
    <property type="entry name" value="Ribosomal_L18_L5e"/>
    <property type="match status" value="1"/>
</dbReference>
<dbReference type="FunFam" id="3.30.420.100:FF:000001">
    <property type="entry name" value="50S ribosomal protein L18"/>
    <property type="match status" value="1"/>
</dbReference>
<dbReference type="Gene3D" id="3.30.420.100">
    <property type="match status" value="1"/>
</dbReference>
<dbReference type="HAMAP" id="MF_01337_B">
    <property type="entry name" value="Ribosomal_uL18_B"/>
    <property type="match status" value="1"/>
</dbReference>
<dbReference type="InterPro" id="IPR004389">
    <property type="entry name" value="Ribosomal_uL18_bac-type"/>
</dbReference>
<dbReference type="InterPro" id="IPR005484">
    <property type="entry name" value="Ribosomal_uL18_bac/euk"/>
</dbReference>
<dbReference type="NCBIfam" id="TIGR00060">
    <property type="entry name" value="L18_bact"/>
    <property type="match status" value="1"/>
</dbReference>
<dbReference type="PANTHER" id="PTHR12899">
    <property type="entry name" value="39S RIBOSOMAL PROTEIN L18, MITOCHONDRIAL"/>
    <property type="match status" value="1"/>
</dbReference>
<dbReference type="PANTHER" id="PTHR12899:SF3">
    <property type="entry name" value="LARGE RIBOSOMAL SUBUNIT PROTEIN UL18M"/>
    <property type="match status" value="1"/>
</dbReference>
<dbReference type="Pfam" id="PF00861">
    <property type="entry name" value="Ribosomal_L18p"/>
    <property type="match status" value="1"/>
</dbReference>
<dbReference type="SUPFAM" id="SSF53137">
    <property type="entry name" value="Translational machinery components"/>
    <property type="match status" value="1"/>
</dbReference>
<evidence type="ECO:0000255" key="1">
    <source>
        <dbReference type="HAMAP-Rule" id="MF_01337"/>
    </source>
</evidence>
<evidence type="ECO:0000305" key="2"/>
<keyword id="KW-1185">Reference proteome</keyword>
<keyword id="KW-0687">Ribonucleoprotein</keyword>
<keyword id="KW-0689">Ribosomal protein</keyword>
<keyword id="KW-0694">RNA-binding</keyword>
<keyword id="KW-0699">rRNA-binding</keyword>
<organism>
    <name type="scientific">Nitrosospira multiformis (strain ATCC 25196 / NCIMB 11849 / C 71)</name>
    <dbReference type="NCBI Taxonomy" id="323848"/>
    <lineage>
        <taxon>Bacteria</taxon>
        <taxon>Pseudomonadati</taxon>
        <taxon>Pseudomonadota</taxon>
        <taxon>Betaproteobacteria</taxon>
        <taxon>Nitrosomonadales</taxon>
        <taxon>Nitrosomonadaceae</taxon>
        <taxon>Nitrosospira</taxon>
    </lineage>
</organism>
<gene>
    <name evidence="1" type="primary">rplR</name>
    <name type="ordered locus">Nmul_A0783</name>
</gene>
<protein>
    <recommendedName>
        <fullName evidence="1">Large ribosomal subunit protein uL18</fullName>
    </recommendedName>
    <alternativeName>
        <fullName evidence="2">50S ribosomal protein L18</fullName>
    </alternativeName>
</protein>
<name>RL18_NITMU</name>
<accession>Q2YAY1</accession>
<reference key="1">
    <citation type="submission" date="2005-08" db="EMBL/GenBank/DDBJ databases">
        <title>Complete sequence of chromosome 1 of Nitrosospira multiformis ATCC 25196.</title>
        <authorList>
            <person name="Copeland A."/>
            <person name="Lucas S."/>
            <person name="Lapidus A."/>
            <person name="Barry K."/>
            <person name="Detter J.C."/>
            <person name="Glavina T."/>
            <person name="Hammon N."/>
            <person name="Israni S."/>
            <person name="Pitluck S."/>
            <person name="Chain P."/>
            <person name="Malfatti S."/>
            <person name="Shin M."/>
            <person name="Vergez L."/>
            <person name="Schmutz J."/>
            <person name="Larimer F."/>
            <person name="Land M."/>
            <person name="Hauser L."/>
            <person name="Kyrpides N."/>
            <person name="Lykidis A."/>
            <person name="Richardson P."/>
        </authorList>
    </citation>
    <scope>NUCLEOTIDE SEQUENCE [LARGE SCALE GENOMIC DNA]</scope>
    <source>
        <strain>ATCC 25196 / NCIMB 11849 / C 71</strain>
    </source>
</reference>
<proteinExistence type="inferred from homology"/>